<feature type="chain" id="PRO_0000159227" description="Uncharacterized protein MJ0725">
    <location>
        <begin position="1"/>
        <end position="261"/>
    </location>
</feature>
<accession>Q58135</accession>
<comment type="similarity">
    <text evidence="1">Belongs to the FrhB family.</text>
</comment>
<name>Y725_METJA</name>
<keyword id="KW-0408">Iron</keyword>
<keyword id="KW-0411">Iron-sulfur</keyword>
<keyword id="KW-0479">Metal-binding</keyword>
<keyword id="KW-1185">Reference proteome</keyword>
<proteinExistence type="inferred from homology"/>
<protein>
    <recommendedName>
        <fullName>Uncharacterized protein MJ0725</fullName>
    </recommendedName>
</protein>
<evidence type="ECO:0000305" key="1"/>
<organism>
    <name type="scientific">Methanocaldococcus jannaschii (strain ATCC 43067 / DSM 2661 / JAL-1 / JCM 10045 / NBRC 100440)</name>
    <name type="common">Methanococcus jannaschii</name>
    <dbReference type="NCBI Taxonomy" id="243232"/>
    <lineage>
        <taxon>Archaea</taxon>
        <taxon>Methanobacteriati</taxon>
        <taxon>Methanobacteriota</taxon>
        <taxon>Methanomada group</taxon>
        <taxon>Methanococci</taxon>
        <taxon>Methanococcales</taxon>
        <taxon>Methanocaldococcaceae</taxon>
        <taxon>Methanocaldococcus</taxon>
    </lineage>
</organism>
<gene>
    <name type="ordered locus">MJ0725</name>
</gene>
<sequence length="261" mass="29017">MKYLSAKSKLNIDAQDGGFTTTLLSYCLENGILDAVVVVGDKNWKPVAYLATTPTELLKSTKSKYSISPNNKLLEYATENYDKVGLVGLPCHILGGLQFDLTLKVGLFCTKNFYYDTIKSIIKERFGVNIDEVAKMNITKGKFVVETLKKKGFAGTEKVVYEIPIKEIEKLCNLGCRVCTDFSAKYADVSVGSVGSEDGWNTVIVRNKMVEDIINEMAEKGLIEVKETVDIKAIEKLENIKKKNEEINKCSAYFAVCPALF</sequence>
<reference key="1">
    <citation type="journal article" date="1996" name="Science">
        <title>Complete genome sequence of the methanogenic archaeon, Methanococcus jannaschii.</title>
        <authorList>
            <person name="Bult C.J."/>
            <person name="White O."/>
            <person name="Olsen G.J."/>
            <person name="Zhou L."/>
            <person name="Fleischmann R.D."/>
            <person name="Sutton G.G."/>
            <person name="Blake J.A."/>
            <person name="FitzGerald L.M."/>
            <person name="Clayton R.A."/>
            <person name="Gocayne J.D."/>
            <person name="Kerlavage A.R."/>
            <person name="Dougherty B.A."/>
            <person name="Tomb J.-F."/>
            <person name="Adams M.D."/>
            <person name="Reich C.I."/>
            <person name="Overbeek R."/>
            <person name="Kirkness E.F."/>
            <person name="Weinstock K.G."/>
            <person name="Merrick J.M."/>
            <person name="Glodek A."/>
            <person name="Scott J.L."/>
            <person name="Geoghagen N.S.M."/>
            <person name="Weidman J.F."/>
            <person name="Fuhrmann J.L."/>
            <person name="Nguyen D."/>
            <person name="Utterback T.R."/>
            <person name="Kelley J.M."/>
            <person name="Peterson J.D."/>
            <person name="Sadow P.W."/>
            <person name="Hanna M.C."/>
            <person name="Cotton M.D."/>
            <person name="Roberts K.M."/>
            <person name="Hurst M.A."/>
            <person name="Kaine B.P."/>
            <person name="Borodovsky M."/>
            <person name="Klenk H.-P."/>
            <person name="Fraser C.M."/>
            <person name="Smith H.O."/>
            <person name="Woese C.R."/>
            <person name="Venter J.C."/>
        </authorList>
    </citation>
    <scope>NUCLEOTIDE SEQUENCE [LARGE SCALE GENOMIC DNA]</scope>
    <source>
        <strain>ATCC 43067 / DSM 2661 / JAL-1 / JCM 10045 / NBRC 100440</strain>
    </source>
</reference>
<dbReference type="EMBL" id="L77117">
    <property type="protein sequence ID" value="AAB98721.1"/>
    <property type="molecule type" value="Genomic_DNA"/>
</dbReference>
<dbReference type="PIR" id="E64390">
    <property type="entry name" value="E64390"/>
</dbReference>
<dbReference type="RefSeq" id="WP_010870230.1">
    <property type="nucleotide sequence ID" value="NC_000909.1"/>
</dbReference>
<dbReference type="SMR" id="Q58135"/>
<dbReference type="FunCoup" id="Q58135">
    <property type="interactions" value="1"/>
</dbReference>
<dbReference type="STRING" id="243232.MJ_0725"/>
<dbReference type="PaxDb" id="243232-MJ_0725"/>
<dbReference type="EnsemblBacteria" id="AAB98721">
    <property type="protein sequence ID" value="AAB98721"/>
    <property type="gene ID" value="MJ_0725"/>
</dbReference>
<dbReference type="GeneID" id="1451602"/>
<dbReference type="KEGG" id="mja:MJ_0725"/>
<dbReference type="eggNOG" id="arCOG02651">
    <property type="taxonomic scope" value="Archaea"/>
</dbReference>
<dbReference type="HOGENOM" id="CLU_037958_0_0_2"/>
<dbReference type="InParanoid" id="Q58135"/>
<dbReference type="OrthoDB" id="38261at2157"/>
<dbReference type="PhylomeDB" id="Q58135"/>
<dbReference type="Proteomes" id="UP000000805">
    <property type="component" value="Chromosome"/>
</dbReference>
<dbReference type="GO" id="GO:0051536">
    <property type="term" value="F:iron-sulfur cluster binding"/>
    <property type="evidence" value="ECO:0007669"/>
    <property type="project" value="UniProtKB-KW"/>
</dbReference>
<dbReference type="GO" id="GO:0046872">
    <property type="term" value="F:metal ion binding"/>
    <property type="evidence" value="ECO:0007669"/>
    <property type="project" value="UniProtKB-KW"/>
</dbReference>
<dbReference type="GO" id="GO:0052592">
    <property type="term" value="F:oxidoreductase activity, acting on CH or CH2 groups, with an iron-sulfur protein as acceptor"/>
    <property type="evidence" value="ECO:0000318"/>
    <property type="project" value="GO_Central"/>
</dbReference>
<dbReference type="Gene3D" id="3.10.450.750">
    <property type="match status" value="1"/>
</dbReference>
<dbReference type="InterPro" id="IPR007516">
    <property type="entry name" value="Co_F420_Hydgase/DH_bsu_N"/>
</dbReference>
<dbReference type="InterPro" id="IPR045220">
    <property type="entry name" value="FRHB/FDHB/HCAR-like"/>
</dbReference>
<dbReference type="InterPro" id="IPR007525">
    <property type="entry name" value="FrhB_FdhB_C"/>
</dbReference>
<dbReference type="NCBIfam" id="NF006807">
    <property type="entry name" value="PRK09325.1"/>
    <property type="match status" value="1"/>
</dbReference>
<dbReference type="PANTHER" id="PTHR31332">
    <property type="entry name" value="7-HYDROXYMETHYL CHLOROPHYLL A REDUCTASE, CHLOROPLASTIC"/>
    <property type="match status" value="1"/>
</dbReference>
<dbReference type="PANTHER" id="PTHR31332:SF0">
    <property type="entry name" value="7-HYDROXYMETHYL CHLOROPHYLL A REDUCTASE, CHLOROPLASTIC"/>
    <property type="match status" value="1"/>
</dbReference>
<dbReference type="Pfam" id="PF04432">
    <property type="entry name" value="FrhB_FdhB_C"/>
    <property type="match status" value="1"/>
</dbReference>
<dbReference type="Pfam" id="PF04422">
    <property type="entry name" value="FrhB_FdhB_N"/>
    <property type="match status" value="1"/>
</dbReference>